<gene>
    <name evidence="1" type="primary">aat</name>
    <name type="ordered locus">NMC0198</name>
</gene>
<dbReference type="EC" id="2.3.2.6" evidence="1"/>
<dbReference type="EMBL" id="AM421808">
    <property type="protein sequence ID" value="CAM09514.1"/>
    <property type="molecule type" value="Genomic_DNA"/>
</dbReference>
<dbReference type="RefSeq" id="WP_002220215.1">
    <property type="nucleotide sequence ID" value="NC_008767.1"/>
</dbReference>
<dbReference type="SMR" id="A1KRN6"/>
<dbReference type="KEGG" id="nmc:NMC0198"/>
<dbReference type="HOGENOM" id="CLU_075045_0_0_4"/>
<dbReference type="Proteomes" id="UP000002286">
    <property type="component" value="Chromosome"/>
</dbReference>
<dbReference type="GO" id="GO:0005737">
    <property type="term" value="C:cytoplasm"/>
    <property type="evidence" value="ECO:0007669"/>
    <property type="project" value="UniProtKB-SubCell"/>
</dbReference>
<dbReference type="GO" id="GO:0008914">
    <property type="term" value="F:leucyl-tRNA--protein transferase activity"/>
    <property type="evidence" value="ECO:0007669"/>
    <property type="project" value="UniProtKB-UniRule"/>
</dbReference>
<dbReference type="GO" id="GO:0030163">
    <property type="term" value="P:protein catabolic process"/>
    <property type="evidence" value="ECO:0007669"/>
    <property type="project" value="UniProtKB-UniRule"/>
</dbReference>
<dbReference type="Gene3D" id="3.40.630.70">
    <property type="entry name" value="Leucyl/phenylalanyl-tRNA-protein transferase, C-terminal domain"/>
    <property type="match status" value="1"/>
</dbReference>
<dbReference type="Gene3D" id="3.30.70.3550">
    <property type="entry name" value="Leucyl/phenylalanyl-tRNA-protein transferase, N-terminal domain"/>
    <property type="match status" value="1"/>
</dbReference>
<dbReference type="HAMAP" id="MF_00688">
    <property type="entry name" value="Leu_Phe_trans"/>
    <property type="match status" value="1"/>
</dbReference>
<dbReference type="InterPro" id="IPR016181">
    <property type="entry name" value="Acyl_CoA_acyltransferase"/>
</dbReference>
<dbReference type="InterPro" id="IPR004616">
    <property type="entry name" value="Leu/Phe-tRNA_Trfase"/>
</dbReference>
<dbReference type="InterPro" id="IPR042203">
    <property type="entry name" value="Leu/Phe-tRNA_Trfase_C"/>
</dbReference>
<dbReference type="InterPro" id="IPR042221">
    <property type="entry name" value="Leu/Phe-tRNA_Trfase_N"/>
</dbReference>
<dbReference type="NCBIfam" id="TIGR00667">
    <property type="entry name" value="aat"/>
    <property type="match status" value="1"/>
</dbReference>
<dbReference type="PANTHER" id="PTHR30098">
    <property type="entry name" value="LEUCYL/PHENYLALANYL-TRNA--PROTEIN TRANSFERASE"/>
    <property type="match status" value="1"/>
</dbReference>
<dbReference type="PANTHER" id="PTHR30098:SF2">
    <property type="entry name" value="LEUCYL_PHENYLALANYL-TRNA--PROTEIN TRANSFERASE"/>
    <property type="match status" value="1"/>
</dbReference>
<dbReference type="Pfam" id="PF03588">
    <property type="entry name" value="Leu_Phe_trans"/>
    <property type="match status" value="1"/>
</dbReference>
<dbReference type="SUPFAM" id="SSF55729">
    <property type="entry name" value="Acyl-CoA N-acyltransferases (Nat)"/>
    <property type="match status" value="1"/>
</dbReference>
<reference key="1">
    <citation type="journal article" date="2007" name="PLoS Genet.">
        <title>Meningococcal genetic variation mechanisms viewed through comparative analysis of serogroup C strain FAM18.</title>
        <authorList>
            <person name="Bentley S.D."/>
            <person name="Vernikos G.S."/>
            <person name="Snyder L.A.S."/>
            <person name="Churcher C."/>
            <person name="Arrowsmith C."/>
            <person name="Chillingworth T."/>
            <person name="Cronin A."/>
            <person name="Davis P.H."/>
            <person name="Holroyd N.E."/>
            <person name="Jagels K."/>
            <person name="Maddison M."/>
            <person name="Moule S."/>
            <person name="Rabbinowitsch E."/>
            <person name="Sharp S."/>
            <person name="Unwin L."/>
            <person name="Whitehead S."/>
            <person name="Quail M.A."/>
            <person name="Achtman M."/>
            <person name="Barrell B.G."/>
            <person name="Saunders N.J."/>
            <person name="Parkhill J."/>
        </authorList>
    </citation>
    <scope>NUCLEOTIDE SEQUENCE [LARGE SCALE GENOMIC DNA]</scope>
    <source>
        <strain>ATCC 700532 / DSM 15464 / FAM18</strain>
    </source>
</reference>
<protein>
    <recommendedName>
        <fullName evidence="1">Leucyl/phenylalanyl-tRNA--protein transferase</fullName>
        <ecNumber evidence="1">2.3.2.6</ecNumber>
    </recommendedName>
    <alternativeName>
        <fullName evidence="1">L/F-transferase</fullName>
    </alternativeName>
    <alternativeName>
        <fullName evidence="1">Leucyltransferase</fullName>
    </alternativeName>
    <alternativeName>
        <fullName evidence="1">Phenyalanyltransferase</fullName>
    </alternativeName>
</protein>
<organism>
    <name type="scientific">Neisseria meningitidis serogroup C / serotype 2a (strain ATCC 700532 / DSM 15464 / FAM18)</name>
    <dbReference type="NCBI Taxonomy" id="272831"/>
    <lineage>
        <taxon>Bacteria</taxon>
        <taxon>Pseudomonadati</taxon>
        <taxon>Pseudomonadota</taxon>
        <taxon>Betaproteobacteria</taxon>
        <taxon>Neisseriales</taxon>
        <taxon>Neisseriaceae</taxon>
        <taxon>Neisseria</taxon>
    </lineage>
</organism>
<keyword id="KW-0012">Acyltransferase</keyword>
<keyword id="KW-0963">Cytoplasm</keyword>
<keyword id="KW-0808">Transferase</keyword>
<name>LFTR_NEIMF</name>
<sequence>MRIPLLAPDNYAFPDPAYALARCDGLVGVSRDLDAGRLLEAYRNGVFPWFLRDGWFFWYAVGPRAVIVPERLHVPRSLEKTLRNCSYRVTVNGCFAEVVAHCAAAVRPNQDGTWIAPEFQTAYLKLHEMGYAHSFECHYPDENGKTRLAGGFYGVQIGRVFYGESMFALQPDASKIAFACAVPFLASLGVELIDCQQDTGHMRRFGSELLPFADFAERLRMLNAVPLKEEIGRREVACKGL</sequence>
<evidence type="ECO:0000255" key="1">
    <source>
        <dbReference type="HAMAP-Rule" id="MF_00688"/>
    </source>
</evidence>
<accession>A1KRN6</accession>
<feature type="chain" id="PRO_0000304344" description="Leucyl/phenylalanyl-tRNA--protein transferase">
    <location>
        <begin position="1"/>
        <end position="241"/>
    </location>
</feature>
<proteinExistence type="inferred from homology"/>
<comment type="function">
    <text evidence="1">Functions in the N-end rule pathway of protein degradation where it conjugates Leu, Phe and, less efficiently, Met from aminoacyl-tRNAs to the N-termini of proteins containing an N-terminal arginine or lysine.</text>
</comment>
<comment type="catalytic activity">
    <reaction evidence="1">
        <text>N-terminal L-lysyl-[protein] + L-leucyl-tRNA(Leu) = N-terminal L-leucyl-L-lysyl-[protein] + tRNA(Leu) + H(+)</text>
        <dbReference type="Rhea" id="RHEA:12340"/>
        <dbReference type="Rhea" id="RHEA-COMP:9613"/>
        <dbReference type="Rhea" id="RHEA-COMP:9622"/>
        <dbReference type="Rhea" id="RHEA-COMP:12670"/>
        <dbReference type="Rhea" id="RHEA-COMP:12671"/>
        <dbReference type="ChEBI" id="CHEBI:15378"/>
        <dbReference type="ChEBI" id="CHEBI:65249"/>
        <dbReference type="ChEBI" id="CHEBI:78442"/>
        <dbReference type="ChEBI" id="CHEBI:78494"/>
        <dbReference type="ChEBI" id="CHEBI:133043"/>
        <dbReference type="EC" id="2.3.2.6"/>
    </reaction>
</comment>
<comment type="catalytic activity">
    <reaction evidence="1">
        <text>N-terminal L-arginyl-[protein] + L-leucyl-tRNA(Leu) = N-terminal L-leucyl-L-arginyl-[protein] + tRNA(Leu) + H(+)</text>
        <dbReference type="Rhea" id="RHEA:50416"/>
        <dbReference type="Rhea" id="RHEA-COMP:9613"/>
        <dbReference type="Rhea" id="RHEA-COMP:9622"/>
        <dbReference type="Rhea" id="RHEA-COMP:12672"/>
        <dbReference type="Rhea" id="RHEA-COMP:12673"/>
        <dbReference type="ChEBI" id="CHEBI:15378"/>
        <dbReference type="ChEBI" id="CHEBI:64719"/>
        <dbReference type="ChEBI" id="CHEBI:78442"/>
        <dbReference type="ChEBI" id="CHEBI:78494"/>
        <dbReference type="ChEBI" id="CHEBI:133044"/>
        <dbReference type="EC" id="2.3.2.6"/>
    </reaction>
</comment>
<comment type="catalytic activity">
    <reaction evidence="1">
        <text>L-phenylalanyl-tRNA(Phe) + an N-terminal L-alpha-aminoacyl-[protein] = an N-terminal L-phenylalanyl-L-alpha-aminoacyl-[protein] + tRNA(Phe)</text>
        <dbReference type="Rhea" id="RHEA:43632"/>
        <dbReference type="Rhea" id="RHEA-COMP:9668"/>
        <dbReference type="Rhea" id="RHEA-COMP:9699"/>
        <dbReference type="Rhea" id="RHEA-COMP:10636"/>
        <dbReference type="Rhea" id="RHEA-COMP:10637"/>
        <dbReference type="ChEBI" id="CHEBI:78442"/>
        <dbReference type="ChEBI" id="CHEBI:78531"/>
        <dbReference type="ChEBI" id="CHEBI:78597"/>
        <dbReference type="ChEBI" id="CHEBI:83561"/>
        <dbReference type="EC" id="2.3.2.6"/>
    </reaction>
</comment>
<comment type="subcellular location">
    <subcellularLocation>
        <location evidence="1">Cytoplasm</location>
    </subcellularLocation>
</comment>
<comment type="similarity">
    <text evidence="1">Belongs to the L/F-transferase family.</text>
</comment>